<proteinExistence type="inferred from homology"/>
<feature type="signal peptide" evidence="2">
    <location>
        <begin position="1"/>
        <end position="50"/>
    </location>
</feature>
<feature type="chain" id="PRO_0000149592" description="Outer capsid glycoprotein VP7" evidence="2">
    <location>
        <begin position="51"/>
        <end position="326"/>
    </location>
</feature>
<feature type="region of interest" description="CNP motif; interaction with ITGAV/ITGB3" evidence="2">
    <location>
        <begin position="165"/>
        <end position="167"/>
    </location>
</feature>
<feature type="region of interest" description="LVD motif; interaction with ITGA4/ITGB1 heterodimer" evidence="2">
    <location>
        <begin position="237"/>
        <end position="239"/>
    </location>
</feature>
<feature type="region of interest" description="GPR motif; interaction with ITGAX/ITGB2" evidence="2">
    <location>
        <begin position="253"/>
        <end position="255"/>
    </location>
</feature>
<feature type="binding site" evidence="2">
    <location>
        <position position="95"/>
    </location>
    <ligand>
        <name>Ca(2+)</name>
        <dbReference type="ChEBI" id="CHEBI:29108"/>
        <label>1</label>
    </ligand>
</feature>
<feature type="binding site" evidence="2">
    <location>
        <position position="177"/>
    </location>
    <ligand>
        <name>Ca(2+)</name>
        <dbReference type="ChEBI" id="CHEBI:29108"/>
        <label>2</label>
    </ligand>
</feature>
<feature type="binding site" evidence="2">
    <location>
        <position position="206"/>
    </location>
    <ligand>
        <name>Ca(2+)</name>
        <dbReference type="ChEBI" id="CHEBI:29108"/>
        <label>1</label>
    </ligand>
</feature>
<feature type="binding site" evidence="2">
    <location>
        <position position="214"/>
    </location>
    <ligand>
        <name>Ca(2+)</name>
        <dbReference type="ChEBI" id="CHEBI:29108"/>
        <label>1</label>
    </ligand>
</feature>
<feature type="binding site" evidence="2">
    <location>
        <position position="216"/>
    </location>
    <ligand>
        <name>Ca(2+)</name>
        <dbReference type="ChEBI" id="CHEBI:29108"/>
        <label>1</label>
    </ligand>
</feature>
<feature type="binding site" evidence="2">
    <location>
        <position position="228"/>
    </location>
    <ligand>
        <name>Ca(2+)</name>
        <dbReference type="ChEBI" id="CHEBI:29108"/>
        <label>2</label>
    </ligand>
</feature>
<feature type="binding site" evidence="2">
    <location>
        <position position="229"/>
    </location>
    <ligand>
        <name>Ca(2+)</name>
        <dbReference type="ChEBI" id="CHEBI:29108"/>
        <label>2</label>
    </ligand>
</feature>
<feature type="binding site" evidence="2">
    <location>
        <position position="231"/>
    </location>
    <ligand>
        <name>Ca(2+)</name>
        <dbReference type="ChEBI" id="CHEBI:29108"/>
        <label>2</label>
    </ligand>
</feature>
<feature type="binding site" evidence="2">
    <location>
        <position position="301"/>
    </location>
    <ligand>
        <name>Ca(2+)</name>
        <dbReference type="ChEBI" id="CHEBI:29108"/>
        <label>2</label>
    </ligand>
</feature>
<feature type="glycosylation site" description="N-linked (GlcNAc...) asparagine; by host" evidence="1">
    <location>
        <position position="69"/>
    </location>
</feature>
<feature type="glycosylation site" description="N-linked (GlcNAc...) asparagine; by host" evidence="1">
    <location>
        <position position="145"/>
    </location>
</feature>
<feature type="disulfide bond" evidence="2">
    <location>
        <begin position="82"/>
        <end position="135"/>
    </location>
</feature>
<feature type="disulfide bond" evidence="2">
    <location>
        <begin position="165"/>
        <end position="249"/>
    </location>
</feature>
<feature type="disulfide bond" evidence="2">
    <location>
        <begin position="191"/>
        <end position="244"/>
    </location>
</feature>
<feature type="disulfide bond" evidence="2">
    <location>
        <begin position="196"/>
        <end position="207"/>
    </location>
</feature>
<feature type="splice variant" id="VSP_038589" description="In isoform 2." evidence="3">
    <location>
        <begin position="1"/>
        <end position="29"/>
    </location>
</feature>
<accession>Q9IPD4</accession>
<dbReference type="EMBL" id="AB046464">
    <property type="protein sequence ID" value="BAB03343.1"/>
    <property type="molecule type" value="Genomic_RNA"/>
</dbReference>
<dbReference type="SMR" id="Q9IPD4"/>
<dbReference type="GO" id="GO:0044166">
    <property type="term" value="C:host cell endoplasmic reticulum lumen"/>
    <property type="evidence" value="ECO:0007669"/>
    <property type="project" value="UniProtKB-SubCell"/>
</dbReference>
<dbReference type="GO" id="GO:0039621">
    <property type="term" value="C:T=13 icosahedral viral capsid"/>
    <property type="evidence" value="ECO:0007669"/>
    <property type="project" value="UniProtKB-UniRule"/>
</dbReference>
<dbReference type="GO" id="GO:0039624">
    <property type="term" value="C:viral outer capsid"/>
    <property type="evidence" value="ECO:0007669"/>
    <property type="project" value="UniProtKB-UniRule"/>
</dbReference>
<dbReference type="GO" id="GO:0046872">
    <property type="term" value="F:metal ion binding"/>
    <property type="evidence" value="ECO:0007669"/>
    <property type="project" value="UniProtKB-KW"/>
</dbReference>
<dbReference type="FunFam" id="2.60.120.800:FF:000001">
    <property type="entry name" value="Outer capsid glycoprotein VP7"/>
    <property type="match status" value="1"/>
</dbReference>
<dbReference type="Gene3D" id="3.40.50.11130">
    <property type="entry name" value="Glycoprotein VP7, domain 1"/>
    <property type="match status" value="1"/>
</dbReference>
<dbReference type="Gene3D" id="2.60.120.800">
    <property type="entry name" value="Rotavirus outer-layer protein VP7, domain 2"/>
    <property type="match status" value="1"/>
</dbReference>
<dbReference type="HAMAP" id="MF_04130">
    <property type="entry name" value="Rota_VP7"/>
    <property type="match status" value="1"/>
</dbReference>
<dbReference type="HAMAP" id="MF_04131">
    <property type="entry name" value="Rota_VP7_A"/>
    <property type="match status" value="1"/>
</dbReference>
<dbReference type="InterPro" id="IPR001963">
    <property type="entry name" value="VP7"/>
</dbReference>
<dbReference type="InterPro" id="IPR042207">
    <property type="entry name" value="VP7_1"/>
</dbReference>
<dbReference type="InterPro" id="IPR042210">
    <property type="entry name" value="VP7_2"/>
</dbReference>
<dbReference type="Pfam" id="PF00434">
    <property type="entry name" value="VP7"/>
    <property type="match status" value="1"/>
</dbReference>
<organismHost>
    <name type="scientific">Equus caballus</name>
    <name type="common">Horse</name>
    <dbReference type="NCBI Taxonomy" id="9796"/>
</organismHost>
<organism>
    <name type="scientific">Rotavirus A (isolate RVA/Equine/Japan/HO-5/1980/G3P[X])</name>
    <name type="common">RV-A</name>
    <dbReference type="NCBI Taxonomy" id="148357"/>
    <lineage>
        <taxon>Viruses</taxon>
        <taxon>Riboviria</taxon>
        <taxon>Orthornavirae</taxon>
        <taxon>Duplornaviricota</taxon>
        <taxon>Resentoviricetes</taxon>
        <taxon>Reovirales</taxon>
        <taxon>Sedoreoviridae</taxon>
        <taxon>Rotavirus</taxon>
        <taxon>Rotavirus A</taxon>
    </lineage>
</organism>
<reference key="1">
    <citation type="journal article" date="1996" name="J. Equine Sci.">
        <title>Identification of the gene encoding VP7 of serotype G3 equine rotavirus.</title>
        <authorList>
            <person name="Tsubokura K."/>
            <person name="Horiuchi H."/>
            <person name="Sato S."/>
            <person name="Oshima H."/>
            <person name="Imagawa H."/>
            <person name="Kamada M."/>
            <person name="Matsuda H."/>
        </authorList>
    </citation>
    <scope>NUCLEOTIDE SEQUENCE [GENOMIC RNA]</scope>
</reference>
<keyword id="KW-0024">Alternative initiation</keyword>
<keyword id="KW-0106">Calcium</keyword>
<keyword id="KW-0167">Capsid protein</keyword>
<keyword id="KW-1015">Disulfide bond</keyword>
<keyword id="KW-0325">Glycoprotein</keyword>
<keyword id="KW-1038">Host endoplasmic reticulum</keyword>
<keyword id="KW-0945">Host-virus interaction</keyword>
<keyword id="KW-0479">Metal-binding</keyword>
<keyword id="KW-1152">Outer capsid protein</keyword>
<keyword id="KW-0732">Signal</keyword>
<keyword id="KW-1146">T=13 icosahedral capsid protein</keyword>
<keyword id="KW-0946">Virion</keyword>
<comment type="function">
    <text evidence="2">Calcium-binding protein that interacts with rotavirus cell receptors once the initial attachment by VP4 has been achieved. Rotavirus attachment and entry into the host cell probably involves multiple sequential contacts between the outer capsid proteins VP4 and VP7, and the cell receptors. Following entry into the host cell, low intracellular or intravesicular Ca(2+) concentration probably causes the calcium-stabilized VP7 trimers to dissociate from the virion. This step is probably necessary for the membrane-disrupting entry step and the release of VP4, which is locked onto the virion by VP7.</text>
</comment>
<comment type="subunit">
    <text evidence="2">Homotrimer; disulfide-linked. 2 Ca(2+) ions bound at each subunit interface in the trimer hold the trimer together. Interacts with the intermediate capsid protein VP6. Interacts with the outer capsid protein VP5*.</text>
</comment>
<comment type="subcellular location">
    <subcellularLocation>
        <location evidence="2">Virion</location>
    </subcellularLocation>
    <subcellularLocation>
        <location evidence="2">Host endoplasmic reticulum lumen</location>
    </subcellularLocation>
    <text evidence="2">The outer layer contains 780 copies of VP7, grouped as 260 trimers. Immature double-layered particles assembled in the cytoplasm bud across the membrane of the endoplasmic reticulum, acquiring during this process a transient lipid membrane that is modified with the ER resident viral glycoproteins NSP4 and VP7; these enveloped particles also contain VP4. As the particles move towards the interior of the ER cisternae, the transient lipid membrane and the non-structural protein NSP4 are lost, while the virus surface proteins VP4 and VP7 rearrange to form the outermost virus protein layer, yielding mature infectious triple-layered particles.</text>
</comment>
<comment type="alternative products">
    <event type="alternative initiation"/>
    <isoform>
        <id>Q9IPD4-1</id>
        <name>1</name>
        <sequence type="displayed"/>
    </isoform>
    <isoform>
        <id>Q9IPD4-2</id>
        <name>2</name>
        <sequence type="described" ref="VSP_038589"/>
    </isoform>
</comment>
<comment type="PTM">
    <text evidence="2">N-glycosylated.</text>
</comment>
<comment type="PTM">
    <text evidence="2">The N-terminus is blocked possibly by pyroglutamic acid.</text>
</comment>
<comment type="miscellaneous">
    <text evidence="2">Some rotavirus strains are neuraminidase-sensitive and require sialic acid to attach to the cell surface. Some rotavirus strains are integrin-dependent. Some rotavirus strains depend on ganglioside for their entry into the host cell. Hsp70 also seems to be involved in the entry of some strains.</text>
</comment>
<comment type="miscellaneous">
    <text evidence="2">In group A rotaviruses, VP7 defines the G serotype.</text>
</comment>
<comment type="miscellaneous">
    <molecule>Isoform 2</molecule>
    <text evidence="3">Produced by alternative initiation at Met-30 of isoform 1.</text>
</comment>
<comment type="similarity">
    <text evidence="2">Belongs to the rotavirus VP7 family.</text>
</comment>
<evidence type="ECO:0000255" key="1"/>
<evidence type="ECO:0000255" key="2">
    <source>
        <dbReference type="HAMAP-Rule" id="MF_04131"/>
    </source>
</evidence>
<evidence type="ECO:0000305" key="3"/>
<sequence length="326" mass="37227">MYGIEYTTVLTFLISFILLNYILKSLTIMMDFIIYRFLFIIVVLPPLLNAQNYGINLPITGSMDTAYANSTQEETFLTSTLCLYYPTEAVAEINDNSWKDTISQLFLTKGWPTGSVYFKEYTDIASFSVDPQLYCDYNVVLMKYNETLQLDMSELADLILNEWLCNPMDINLYYYQQTDEANKWISMGSSCTIKVCPLNTQTLGIGCLTTDTTTFEEVATAEKLVITDVVDGVNHKLDVTTSTCTIRNCKKLGPRENVAVIQIGGSDILDITADPTTAPQTERMMRINWKKWWQVFYTVVDYVNQIIQAMSKRSRSLNSAAFYYRV</sequence>
<name>VP7_ROTEO</name>
<protein>
    <recommendedName>
        <fullName evidence="2">Outer capsid glycoprotein VP7</fullName>
    </recommendedName>
</protein>